<gene>
    <name evidence="1" type="primary">pup</name>
    <name type="ordered locus">MLBr01321</name>
</gene>
<reference key="1">
    <citation type="journal article" date="2009" name="Nat. Genet.">
        <title>Comparative genomic and phylogeographic analysis of Mycobacterium leprae.</title>
        <authorList>
            <person name="Monot M."/>
            <person name="Honore N."/>
            <person name="Garnier T."/>
            <person name="Zidane N."/>
            <person name="Sherafi D."/>
            <person name="Paniz-Mondolfi A."/>
            <person name="Matsuoka M."/>
            <person name="Taylor G.M."/>
            <person name="Donoghue H.D."/>
            <person name="Bouwman A."/>
            <person name="Mays S."/>
            <person name="Watson C."/>
            <person name="Lockwood D."/>
            <person name="Khamispour A."/>
            <person name="Dowlati Y."/>
            <person name="Jianping S."/>
            <person name="Rea T.H."/>
            <person name="Vera-Cabrera L."/>
            <person name="Stefani M.M."/>
            <person name="Banu S."/>
            <person name="Macdonald M."/>
            <person name="Sapkota B.R."/>
            <person name="Spencer J.S."/>
            <person name="Thomas J."/>
            <person name="Harshman K."/>
            <person name="Singh P."/>
            <person name="Busso P."/>
            <person name="Gattiker A."/>
            <person name="Rougemont J."/>
            <person name="Brennan P.J."/>
            <person name="Cole S.T."/>
        </authorList>
    </citation>
    <scope>NUCLEOTIDE SEQUENCE [LARGE SCALE GENOMIC DNA]</scope>
    <source>
        <strain>Br4923</strain>
    </source>
</reference>
<accession>B8ZRF2</accession>
<name>PUP_MYCLB</name>
<feature type="chain" id="PRO_0000390593" description="Prokaryotic ubiquitin-like protein Pup">
    <location>
        <begin position="1"/>
        <end position="63"/>
    </location>
</feature>
<feature type="region of interest" description="Disordered" evidence="2">
    <location>
        <begin position="1"/>
        <end position="36"/>
    </location>
</feature>
<feature type="region of interest" description="ARC ATPase binding" evidence="1">
    <location>
        <begin position="20"/>
        <end position="57"/>
    </location>
</feature>
<feature type="coiled-coil region" evidence="1">
    <location>
        <begin position="23"/>
        <end position="51"/>
    </location>
</feature>
<feature type="compositionally biased region" description="Basic and acidic residues" evidence="2">
    <location>
        <begin position="1"/>
        <end position="11"/>
    </location>
</feature>
<feature type="modified residue" description="Deamidated glutamine" evidence="1">
    <location>
        <position position="63"/>
    </location>
</feature>
<feature type="cross-link" description="Isoglutamyl lysine isopeptide (Gln-Lys) (interchain with K-? in acceptor proteins)" evidence="1">
    <location>
        <position position="63"/>
    </location>
</feature>
<organism>
    <name type="scientific">Mycobacterium leprae (strain Br4923)</name>
    <dbReference type="NCBI Taxonomy" id="561304"/>
    <lineage>
        <taxon>Bacteria</taxon>
        <taxon>Bacillati</taxon>
        <taxon>Actinomycetota</taxon>
        <taxon>Actinomycetes</taxon>
        <taxon>Mycobacteriales</taxon>
        <taxon>Mycobacteriaceae</taxon>
        <taxon>Mycobacterium</taxon>
    </lineage>
</organism>
<comment type="function">
    <text evidence="1">Protein modifier that is covalently attached to lysine residues of substrate proteins, thereby targeting them for proteasomal degradation. The tagging system is termed pupylation.</text>
</comment>
<comment type="pathway">
    <text evidence="1">Protein degradation; proteasomal Pup-dependent pathway.</text>
</comment>
<comment type="subunit">
    <text evidence="1">Strongly interacts with the proteasome-associated ATPase ARC through a hydrophobic interface; the interacting region of Pup lies in its C-terminal half. There is one Pup binding site per ARC hexamer ring.</text>
</comment>
<comment type="domain">
    <text evidence="1">The N-terminal unstructured half of Pup provides a signal required to initiate unfolding and degradation by the proteasome but is not needed for pupylation, while the C-terminal helical half of Pup interacts with ARC to target proteins to the proteasome.</text>
</comment>
<comment type="PTM">
    <text evidence="1">Is modified by deamidation of its C-terminal glutamine to glutamate by the deamidase Dop, a prerequisite to the subsequent pupylation process.</text>
</comment>
<comment type="similarity">
    <text evidence="1">Belongs to the prokaryotic ubiquitin-like protein family.</text>
</comment>
<keyword id="KW-0175">Coiled coil</keyword>
<keyword id="KW-1017">Isopeptide bond</keyword>
<keyword id="KW-0833">Ubl conjugation pathway</keyword>
<evidence type="ECO:0000255" key="1">
    <source>
        <dbReference type="HAMAP-Rule" id="MF_02106"/>
    </source>
</evidence>
<evidence type="ECO:0000256" key="2">
    <source>
        <dbReference type="SAM" id="MobiDB-lite"/>
    </source>
</evidence>
<protein>
    <recommendedName>
        <fullName evidence="1">Prokaryotic ubiquitin-like protein Pup</fullName>
    </recommendedName>
    <alternativeName>
        <fullName evidence="1">Bacterial ubiquitin-like modifier</fullName>
    </alternativeName>
</protein>
<dbReference type="EMBL" id="FM211192">
    <property type="protein sequence ID" value="CAR71416.1"/>
    <property type="molecule type" value="Genomic_DNA"/>
</dbReference>
<dbReference type="SMR" id="B8ZRF2"/>
<dbReference type="KEGG" id="mlb:MLBr01321"/>
<dbReference type="HOGENOM" id="CLU_183816_1_0_11"/>
<dbReference type="UniPathway" id="UPA00997"/>
<dbReference type="Proteomes" id="UP000006900">
    <property type="component" value="Chromosome"/>
</dbReference>
<dbReference type="GO" id="GO:0070628">
    <property type="term" value="F:proteasome binding"/>
    <property type="evidence" value="ECO:0007669"/>
    <property type="project" value="UniProtKB-UniRule"/>
</dbReference>
<dbReference type="GO" id="GO:0031386">
    <property type="term" value="F:protein tag activity"/>
    <property type="evidence" value="ECO:0007669"/>
    <property type="project" value="UniProtKB-UniRule"/>
</dbReference>
<dbReference type="GO" id="GO:0019941">
    <property type="term" value="P:modification-dependent protein catabolic process"/>
    <property type="evidence" value="ECO:0007669"/>
    <property type="project" value="UniProtKB-UniRule"/>
</dbReference>
<dbReference type="GO" id="GO:0010498">
    <property type="term" value="P:proteasomal protein catabolic process"/>
    <property type="evidence" value="ECO:0007669"/>
    <property type="project" value="UniProtKB-UniRule"/>
</dbReference>
<dbReference type="GO" id="GO:0070490">
    <property type="term" value="P:protein pupylation"/>
    <property type="evidence" value="ECO:0007669"/>
    <property type="project" value="UniProtKB-UniRule"/>
</dbReference>
<dbReference type="HAMAP" id="MF_02106">
    <property type="entry name" value="Pup"/>
    <property type="match status" value="1"/>
</dbReference>
<dbReference type="InterPro" id="IPR008515">
    <property type="entry name" value="Ubiquitin-like_Pup"/>
</dbReference>
<dbReference type="NCBIfam" id="TIGR03687">
    <property type="entry name" value="pupylate_cterm"/>
    <property type="match status" value="1"/>
</dbReference>
<dbReference type="Pfam" id="PF05639">
    <property type="entry name" value="Pup"/>
    <property type="match status" value="1"/>
</dbReference>
<sequence length="63" mass="7067">MAQEQTRRGGGGDDDEFTSSTSVGQERREKLTEETDDLLDEIDDVLEENAEDFVRAYVQKGGQ</sequence>
<proteinExistence type="inferred from homology"/>